<evidence type="ECO:0000255" key="1">
    <source>
        <dbReference type="HAMAP-Rule" id="MF_00678"/>
    </source>
</evidence>
<name>Y287_NITHX</name>
<feature type="chain" id="PRO_0000314200" description="UPF0262 protein Nham_0287">
    <location>
        <begin position="1"/>
        <end position="164"/>
    </location>
</feature>
<comment type="similarity">
    <text evidence="1">Belongs to the UPF0262 family.</text>
</comment>
<sequence length="164" mass="18659">MSKTPPKEDSRNRIVAVMLDEDSIGRSGPDIEHERAIAIYDLVEKNLFAPEGAGGGPFTLRIAITGNRLMFDIRREDDAPVVTHLLSLTPFRRIVKDYFMICDSYYQAIRTATPDKIEAIDMGRRGIHDEGSRTLQERLNGKVRVDFETARRLFTLISVLHWKG</sequence>
<protein>
    <recommendedName>
        <fullName evidence="1">UPF0262 protein Nham_0287</fullName>
    </recommendedName>
</protein>
<proteinExistence type="inferred from homology"/>
<organism>
    <name type="scientific">Nitrobacter hamburgensis (strain DSM 10229 / NCIMB 13809 / X14)</name>
    <dbReference type="NCBI Taxonomy" id="323097"/>
    <lineage>
        <taxon>Bacteria</taxon>
        <taxon>Pseudomonadati</taxon>
        <taxon>Pseudomonadota</taxon>
        <taxon>Alphaproteobacteria</taxon>
        <taxon>Hyphomicrobiales</taxon>
        <taxon>Nitrobacteraceae</taxon>
        <taxon>Nitrobacter</taxon>
    </lineage>
</organism>
<reference key="1">
    <citation type="submission" date="2006-03" db="EMBL/GenBank/DDBJ databases">
        <title>Complete sequence of chromosome of Nitrobacter hamburgensis X14.</title>
        <authorList>
            <consortium name="US DOE Joint Genome Institute"/>
            <person name="Copeland A."/>
            <person name="Lucas S."/>
            <person name="Lapidus A."/>
            <person name="Barry K."/>
            <person name="Detter J.C."/>
            <person name="Glavina del Rio T."/>
            <person name="Hammon N."/>
            <person name="Israni S."/>
            <person name="Dalin E."/>
            <person name="Tice H."/>
            <person name="Pitluck S."/>
            <person name="Chain P."/>
            <person name="Malfatti S."/>
            <person name="Shin M."/>
            <person name="Vergez L."/>
            <person name="Schmutz J."/>
            <person name="Larimer F."/>
            <person name="Land M."/>
            <person name="Hauser L."/>
            <person name="Kyrpides N."/>
            <person name="Ivanova N."/>
            <person name="Ward B."/>
            <person name="Arp D."/>
            <person name="Klotz M."/>
            <person name="Stein L."/>
            <person name="O'Mullan G."/>
            <person name="Starkenburg S."/>
            <person name="Sayavedra L."/>
            <person name="Poret-Peterson A.T."/>
            <person name="Gentry M.E."/>
            <person name="Bruce D."/>
            <person name="Richardson P."/>
        </authorList>
    </citation>
    <scope>NUCLEOTIDE SEQUENCE [LARGE SCALE GENOMIC DNA]</scope>
    <source>
        <strain>DSM 10229 / NCIMB 13809 / X14</strain>
    </source>
</reference>
<keyword id="KW-1185">Reference proteome</keyword>
<gene>
    <name type="ordered locus">Nham_0287</name>
</gene>
<dbReference type="EMBL" id="CP000319">
    <property type="protein sequence ID" value="ABE61185.1"/>
    <property type="molecule type" value="Genomic_DNA"/>
</dbReference>
<dbReference type="RefSeq" id="WP_011508889.1">
    <property type="nucleotide sequence ID" value="NC_007964.1"/>
</dbReference>
<dbReference type="STRING" id="323097.Nham_0287"/>
<dbReference type="KEGG" id="nha:Nham_0287"/>
<dbReference type="eggNOG" id="COG5328">
    <property type="taxonomic scope" value="Bacteria"/>
</dbReference>
<dbReference type="HOGENOM" id="CLU_112904_0_0_5"/>
<dbReference type="OrthoDB" id="9798434at2"/>
<dbReference type="Proteomes" id="UP000001953">
    <property type="component" value="Chromosome"/>
</dbReference>
<dbReference type="HAMAP" id="MF_00678">
    <property type="entry name" value="UPF0262"/>
    <property type="match status" value="1"/>
</dbReference>
<dbReference type="InterPro" id="IPR008321">
    <property type="entry name" value="UCP032146"/>
</dbReference>
<dbReference type="NCBIfam" id="NF002769">
    <property type="entry name" value="PRK02853.1"/>
    <property type="match status" value="1"/>
</dbReference>
<dbReference type="Pfam" id="PF06793">
    <property type="entry name" value="UPF0262"/>
    <property type="match status" value="1"/>
</dbReference>
<dbReference type="PIRSF" id="PIRSF032146">
    <property type="entry name" value="UCP032146"/>
    <property type="match status" value="1"/>
</dbReference>
<accession>Q1QRG2</accession>